<accession>Q24640</accession>
<gene>
    <name type="primary">Adhr</name>
    <name type="synonym">Adh-dup</name>
</gene>
<sequence>MYDLTGKHVCYVADCGGIALETSKVLMTKNIAKLAILQSVENQPAIARLQSIKHSTQIFFWTFDVTMARQEMKKYFDEVMVQMDYIDVLINGATLCDERNIDATINTNLTGMMNTVATVLPYMDRKMGGSGGLIVNVTSVIGLDPSPVFCAYSASKFGVIGFTRSLADPLYYTQNGVAVMAVCCGPTKVFVDRELNAFLEYGQTFADRLRRAPCQSTAVCGQNIVTAIERSENGQIWIADKGGLELLTLHWYWHMADQFLSYMQSTDDENQEQFVSGQR</sequence>
<name>ADHR_DROSU</name>
<organism>
    <name type="scientific">Drosophila subobscura</name>
    <name type="common">Fruit fly</name>
    <dbReference type="NCBI Taxonomy" id="7241"/>
    <lineage>
        <taxon>Eukaryota</taxon>
        <taxon>Metazoa</taxon>
        <taxon>Ecdysozoa</taxon>
        <taxon>Arthropoda</taxon>
        <taxon>Hexapoda</taxon>
        <taxon>Insecta</taxon>
        <taxon>Pterygota</taxon>
        <taxon>Neoptera</taxon>
        <taxon>Endopterygota</taxon>
        <taxon>Diptera</taxon>
        <taxon>Brachycera</taxon>
        <taxon>Muscomorpha</taxon>
        <taxon>Ephydroidea</taxon>
        <taxon>Drosophilidae</taxon>
        <taxon>Drosophila</taxon>
        <taxon>Sophophora</taxon>
    </lineage>
</organism>
<proteinExistence type="inferred from homology"/>
<reference key="1">
    <citation type="journal article" date="1992" name="Mol. Biol. Evol.">
        <title>The Drosophila subobscura Adh genomic region contains valuable evolutionary markers.</title>
        <authorList>
            <person name="Marfany G."/>
            <person name="Gonzalez-Duarte R."/>
        </authorList>
    </citation>
    <scope>NUCLEOTIDE SEQUENCE [GENOMIC DNA]</scope>
</reference>
<keyword id="KW-0560">Oxidoreductase</keyword>
<protein>
    <recommendedName>
        <fullName>Alcohol dehydrogenase-related 31 kDa protein</fullName>
    </recommendedName>
</protein>
<feature type="chain" id="PRO_0000054512" description="Alcohol dehydrogenase-related 31 kDa protein">
    <location>
        <begin position="1"/>
        <end position="279"/>
    </location>
</feature>
<feature type="active site" description="Proton acceptor" evidence="2">
    <location>
        <position position="152"/>
    </location>
</feature>
<feature type="binding site" evidence="1">
    <location>
        <begin position="11"/>
        <end position="34"/>
    </location>
    <ligand>
        <name>NAD(+)</name>
        <dbReference type="ChEBI" id="CHEBI:57540"/>
    </ligand>
</feature>
<feature type="binding site" evidence="1">
    <location>
        <position position="139"/>
    </location>
    <ligand>
        <name>substrate</name>
    </ligand>
</feature>
<dbReference type="EMBL" id="M55545">
    <property type="protein sequence ID" value="AAA28340.1"/>
    <property type="molecule type" value="Genomic_DNA"/>
</dbReference>
<dbReference type="PIR" id="B42180">
    <property type="entry name" value="B42180"/>
</dbReference>
<dbReference type="SMR" id="Q24640"/>
<dbReference type="GO" id="GO:0005737">
    <property type="term" value="C:cytoplasm"/>
    <property type="evidence" value="ECO:0007669"/>
    <property type="project" value="TreeGrafter"/>
</dbReference>
<dbReference type="GO" id="GO:0016491">
    <property type="term" value="F:oxidoreductase activity"/>
    <property type="evidence" value="ECO:0007669"/>
    <property type="project" value="UniProtKB-KW"/>
</dbReference>
<dbReference type="CDD" id="cd05323">
    <property type="entry name" value="ADH_SDR_c_like"/>
    <property type="match status" value="1"/>
</dbReference>
<dbReference type="Gene3D" id="3.40.50.720">
    <property type="entry name" value="NAD(P)-binding Rossmann-like Domain"/>
    <property type="match status" value="1"/>
</dbReference>
<dbReference type="InterPro" id="IPR002427">
    <property type="entry name" value="ADH-rel"/>
</dbReference>
<dbReference type="InterPro" id="IPR036291">
    <property type="entry name" value="NAD(P)-bd_dom_sf"/>
</dbReference>
<dbReference type="InterPro" id="IPR020904">
    <property type="entry name" value="Sc_DH/Rdtase_CS"/>
</dbReference>
<dbReference type="InterPro" id="IPR002347">
    <property type="entry name" value="SDR_fam"/>
</dbReference>
<dbReference type="PANTHER" id="PTHR44229">
    <property type="entry name" value="15-HYDROXYPROSTAGLANDIN DEHYDROGENASE [NAD(+)]"/>
    <property type="match status" value="1"/>
</dbReference>
<dbReference type="PANTHER" id="PTHR44229:SF8">
    <property type="entry name" value="ALCOHOL DEHYDROGENASE-RELATED"/>
    <property type="match status" value="1"/>
</dbReference>
<dbReference type="Pfam" id="PF00106">
    <property type="entry name" value="adh_short"/>
    <property type="match status" value="1"/>
</dbReference>
<dbReference type="PRINTS" id="PR01170">
    <property type="entry name" value="ADHRELATED"/>
</dbReference>
<dbReference type="PRINTS" id="PR01167">
    <property type="entry name" value="INSADHFAMILY"/>
</dbReference>
<dbReference type="PRINTS" id="PR00080">
    <property type="entry name" value="SDRFAMILY"/>
</dbReference>
<dbReference type="SUPFAM" id="SSF51735">
    <property type="entry name" value="NAD(P)-binding Rossmann-fold domains"/>
    <property type="match status" value="1"/>
</dbReference>
<dbReference type="PROSITE" id="PS00061">
    <property type="entry name" value="ADH_SHORT"/>
    <property type="match status" value="1"/>
</dbReference>
<comment type="similarity">
    <text evidence="3">Belongs to the short-chain dehydrogenases/reductases (SDR) family.</text>
</comment>
<evidence type="ECO:0000250" key="1"/>
<evidence type="ECO:0000255" key="2">
    <source>
        <dbReference type="PROSITE-ProRule" id="PRU10001"/>
    </source>
</evidence>
<evidence type="ECO:0000305" key="3"/>